<reference key="1">
    <citation type="journal article" date="2004" name="Plant J.">
        <title>DVL, a novel class of small polypeptides: overexpression alters Arabidopsis development.</title>
        <authorList>
            <person name="Wen J."/>
            <person name="Lease K.A."/>
            <person name="Walker J.C."/>
        </authorList>
    </citation>
    <scope>NUCLEOTIDE SEQUENCE [GENOMIC DNA]</scope>
    <scope>GENE FAMILY</scope>
    <scope>NOMENCLATURE</scope>
    <source>
        <strain>cv. Columbia</strain>
    </source>
</reference>
<reference key="2">
    <citation type="journal article" date="1999" name="Nature">
        <title>Sequence and analysis of chromosome 4 of the plant Arabidopsis thaliana.</title>
        <authorList>
            <person name="Mayer K.F.X."/>
            <person name="Schueller C."/>
            <person name="Wambutt R."/>
            <person name="Murphy G."/>
            <person name="Volckaert G."/>
            <person name="Pohl T."/>
            <person name="Duesterhoeft A."/>
            <person name="Stiekema W."/>
            <person name="Entian K.-D."/>
            <person name="Terryn N."/>
            <person name="Harris B."/>
            <person name="Ansorge W."/>
            <person name="Brandt P."/>
            <person name="Grivell L.A."/>
            <person name="Rieger M."/>
            <person name="Weichselgartner M."/>
            <person name="de Simone V."/>
            <person name="Obermaier B."/>
            <person name="Mache R."/>
            <person name="Mueller M."/>
            <person name="Kreis M."/>
            <person name="Delseny M."/>
            <person name="Puigdomenech P."/>
            <person name="Watson M."/>
            <person name="Schmidtheini T."/>
            <person name="Reichert B."/>
            <person name="Portetelle D."/>
            <person name="Perez-Alonso M."/>
            <person name="Boutry M."/>
            <person name="Bancroft I."/>
            <person name="Vos P."/>
            <person name="Hoheisel J."/>
            <person name="Zimmermann W."/>
            <person name="Wedler H."/>
            <person name="Ridley P."/>
            <person name="Langham S.-A."/>
            <person name="McCullagh B."/>
            <person name="Bilham L."/>
            <person name="Robben J."/>
            <person name="van der Schueren J."/>
            <person name="Grymonprez B."/>
            <person name="Chuang Y.-J."/>
            <person name="Vandenbussche F."/>
            <person name="Braeken M."/>
            <person name="Weltjens I."/>
            <person name="Voet M."/>
            <person name="Bastiaens I."/>
            <person name="Aert R."/>
            <person name="Defoor E."/>
            <person name="Weitzenegger T."/>
            <person name="Bothe G."/>
            <person name="Ramsperger U."/>
            <person name="Hilbert H."/>
            <person name="Braun M."/>
            <person name="Holzer E."/>
            <person name="Brandt A."/>
            <person name="Peters S."/>
            <person name="van Staveren M."/>
            <person name="Dirkse W."/>
            <person name="Mooijman P."/>
            <person name="Klein Lankhorst R."/>
            <person name="Rose M."/>
            <person name="Hauf J."/>
            <person name="Koetter P."/>
            <person name="Berneiser S."/>
            <person name="Hempel S."/>
            <person name="Feldpausch M."/>
            <person name="Lamberth S."/>
            <person name="Van den Daele H."/>
            <person name="De Keyser A."/>
            <person name="Buysshaert C."/>
            <person name="Gielen J."/>
            <person name="Villarroel R."/>
            <person name="De Clercq R."/>
            <person name="van Montagu M."/>
            <person name="Rogers J."/>
            <person name="Cronin A."/>
            <person name="Quail M.A."/>
            <person name="Bray-Allen S."/>
            <person name="Clark L."/>
            <person name="Doggett J."/>
            <person name="Hall S."/>
            <person name="Kay M."/>
            <person name="Lennard N."/>
            <person name="McLay K."/>
            <person name="Mayes R."/>
            <person name="Pettett A."/>
            <person name="Rajandream M.A."/>
            <person name="Lyne M."/>
            <person name="Benes V."/>
            <person name="Rechmann S."/>
            <person name="Borkova D."/>
            <person name="Bloecker H."/>
            <person name="Scharfe M."/>
            <person name="Grimm M."/>
            <person name="Loehnert T.-H."/>
            <person name="Dose S."/>
            <person name="de Haan M."/>
            <person name="Maarse A.C."/>
            <person name="Schaefer M."/>
            <person name="Mueller-Auer S."/>
            <person name="Gabel C."/>
            <person name="Fuchs M."/>
            <person name="Fartmann B."/>
            <person name="Granderath K."/>
            <person name="Dauner D."/>
            <person name="Herzl A."/>
            <person name="Neumann S."/>
            <person name="Argiriou A."/>
            <person name="Vitale D."/>
            <person name="Liguori R."/>
            <person name="Piravandi E."/>
            <person name="Massenet O."/>
            <person name="Quigley F."/>
            <person name="Clabauld G."/>
            <person name="Muendlein A."/>
            <person name="Felber R."/>
            <person name="Schnabl S."/>
            <person name="Hiller R."/>
            <person name="Schmidt W."/>
            <person name="Lecharny A."/>
            <person name="Aubourg S."/>
            <person name="Chefdor F."/>
            <person name="Cooke R."/>
            <person name="Berger C."/>
            <person name="Monfort A."/>
            <person name="Casacuberta E."/>
            <person name="Gibbons T."/>
            <person name="Weber N."/>
            <person name="Vandenbol M."/>
            <person name="Bargues M."/>
            <person name="Terol J."/>
            <person name="Torres A."/>
            <person name="Perez-Perez A."/>
            <person name="Purnelle B."/>
            <person name="Bent E."/>
            <person name="Johnson S."/>
            <person name="Tacon D."/>
            <person name="Jesse T."/>
            <person name="Heijnen L."/>
            <person name="Schwarz S."/>
            <person name="Scholler P."/>
            <person name="Heber S."/>
            <person name="Francs P."/>
            <person name="Bielke C."/>
            <person name="Frishman D."/>
            <person name="Haase D."/>
            <person name="Lemcke K."/>
            <person name="Mewes H.-W."/>
            <person name="Stocker S."/>
            <person name="Zaccaria P."/>
            <person name="Bevan M."/>
            <person name="Wilson R.K."/>
            <person name="de la Bastide M."/>
            <person name="Habermann K."/>
            <person name="Parnell L."/>
            <person name="Dedhia N."/>
            <person name="Gnoj L."/>
            <person name="Schutz K."/>
            <person name="Huang E."/>
            <person name="Spiegel L."/>
            <person name="Sekhon M."/>
            <person name="Murray J."/>
            <person name="Sheet P."/>
            <person name="Cordes M."/>
            <person name="Abu-Threideh J."/>
            <person name="Stoneking T."/>
            <person name="Kalicki J."/>
            <person name="Graves T."/>
            <person name="Harmon G."/>
            <person name="Edwards J."/>
            <person name="Latreille P."/>
            <person name="Courtney L."/>
            <person name="Cloud J."/>
            <person name="Abbott A."/>
            <person name="Scott K."/>
            <person name="Johnson D."/>
            <person name="Minx P."/>
            <person name="Bentley D."/>
            <person name="Fulton B."/>
            <person name="Miller N."/>
            <person name="Greco T."/>
            <person name="Kemp K."/>
            <person name="Kramer J."/>
            <person name="Fulton L."/>
            <person name="Mardis E."/>
            <person name="Dante M."/>
            <person name="Pepin K."/>
            <person name="Hillier L.W."/>
            <person name="Nelson J."/>
            <person name="Spieth J."/>
            <person name="Ryan E."/>
            <person name="Andrews S."/>
            <person name="Geisel C."/>
            <person name="Layman D."/>
            <person name="Du H."/>
            <person name="Ali J."/>
            <person name="Berghoff A."/>
            <person name="Jones K."/>
            <person name="Drone K."/>
            <person name="Cotton M."/>
            <person name="Joshu C."/>
            <person name="Antonoiu B."/>
            <person name="Zidanic M."/>
            <person name="Strong C."/>
            <person name="Sun H."/>
            <person name="Lamar B."/>
            <person name="Yordan C."/>
            <person name="Ma P."/>
            <person name="Zhong J."/>
            <person name="Preston R."/>
            <person name="Vil D."/>
            <person name="Shekher M."/>
            <person name="Matero A."/>
            <person name="Shah R."/>
            <person name="Swaby I.K."/>
            <person name="O'Shaughnessy A."/>
            <person name="Rodriguez M."/>
            <person name="Hoffman J."/>
            <person name="Till S."/>
            <person name="Granat S."/>
            <person name="Shohdy N."/>
            <person name="Hasegawa A."/>
            <person name="Hameed A."/>
            <person name="Lodhi M."/>
            <person name="Johnson A."/>
            <person name="Chen E."/>
            <person name="Marra M.A."/>
            <person name="Martienssen R."/>
            <person name="McCombie W.R."/>
        </authorList>
    </citation>
    <scope>NUCLEOTIDE SEQUENCE [LARGE SCALE GENOMIC DNA]</scope>
    <source>
        <strain>cv. Columbia</strain>
    </source>
</reference>
<reference key="3">
    <citation type="journal article" date="2017" name="Plant J.">
        <title>Araport11: a complete reannotation of the Arabidopsis thaliana reference genome.</title>
        <authorList>
            <person name="Cheng C.Y."/>
            <person name="Krishnakumar V."/>
            <person name="Chan A.P."/>
            <person name="Thibaud-Nissen F."/>
            <person name="Schobel S."/>
            <person name="Town C.D."/>
        </authorList>
    </citation>
    <scope>GENOME REANNOTATION</scope>
    <source>
        <strain>cv. Columbia</strain>
    </source>
</reference>
<reference key="4">
    <citation type="journal article" date="2006" name="Plant Biotechnol. J.">
        <title>Simultaneous high-throughput recombinational cloning of open reading frames in closed and open configurations.</title>
        <authorList>
            <person name="Underwood B.A."/>
            <person name="Vanderhaeghen R."/>
            <person name="Whitford R."/>
            <person name="Town C.D."/>
            <person name="Hilson P."/>
        </authorList>
    </citation>
    <scope>NUCLEOTIDE SEQUENCE [LARGE SCALE MRNA]</scope>
    <source>
        <strain>cv. Columbia</strain>
    </source>
</reference>
<reference key="5">
    <citation type="journal article" date="2004" name="Plant J.">
        <title>Overexpression of a novel small peptide ROTUNDIFOLIA4 decreases cell proliferation and alters leaf shape in Arabidopsis thaliana.</title>
        <authorList>
            <person name="Narita N.N."/>
            <person name="Moore S."/>
            <person name="Horiguchi G."/>
            <person name="Kubo M."/>
            <person name="Demura T."/>
            <person name="Fukuda H."/>
            <person name="Goodrich J."/>
            <person name="Tsukaya H."/>
        </authorList>
    </citation>
    <scope>GENE FAMILY</scope>
    <source>
        <strain>cv. Columbia</strain>
        <strain>cv. Landsberg erecta</strain>
    </source>
</reference>
<reference key="6">
    <citation type="journal article" date="2015" name="J. Plant Res.">
        <title>Comparative analysis of the RTFL peptide family on the control of plant organogenesis.</title>
        <authorList>
            <person name="Guo P."/>
            <person name="Yoshimura A."/>
            <person name="Ishikawa N."/>
            <person name="Yamaguchi T."/>
            <person name="Guo Y."/>
            <person name="Tsukaya H."/>
        </authorList>
    </citation>
    <scope>REVIEW</scope>
    <scope>GENE FAMILY</scope>
    <scope>NOMENCLATURE</scope>
    <source>
        <strain>cv. Columbia</strain>
    </source>
</reference>
<organism>
    <name type="scientific">Arabidopsis thaliana</name>
    <name type="common">Mouse-ear cress</name>
    <dbReference type="NCBI Taxonomy" id="3702"/>
    <lineage>
        <taxon>Eukaryota</taxon>
        <taxon>Viridiplantae</taxon>
        <taxon>Streptophyta</taxon>
        <taxon>Embryophyta</taxon>
        <taxon>Tracheophyta</taxon>
        <taxon>Spermatophyta</taxon>
        <taxon>Magnoliopsida</taxon>
        <taxon>eudicotyledons</taxon>
        <taxon>Gunneridae</taxon>
        <taxon>Pentapetalae</taxon>
        <taxon>rosids</taxon>
        <taxon>malvids</taxon>
        <taxon>Brassicales</taxon>
        <taxon>Brassicaceae</taxon>
        <taxon>Camelineae</taxon>
        <taxon>Arabidopsis</taxon>
    </lineage>
</organism>
<dbReference type="EMBL" id="BK001760">
    <property type="protein sequence ID" value="DAA02288.1"/>
    <property type="molecule type" value="Genomic_DNA"/>
</dbReference>
<dbReference type="EMBL" id="AL031986">
    <property type="status" value="NOT_ANNOTATED_CDS"/>
    <property type="molecule type" value="Genomic_DNA"/>
</dbReference>
<dbReference type="EMBL" id="CP002687">
    <property type="protein sequence ID" value="AEE86564.1"/>
    <property type="molecule type" value="Genomic_DNA"/>
</dbReference>
<dbReference type="EMBL" id="DQ487702">
    <property type="protein sequence ID" value="ABF59276.1"/>
    <property type="molecule type" value="mRNA"/>
</dbReference>
<dbReference type="EMBL" id="DQ652801">
    <property type="protein sequence ID" value="ABK28375.1"/>
    <property type="status" value="ALT_SEQ"/>
    <property type="molecule type" value="mRNA"/>
</dbReference>
<dbReference type="RefSeq" id="NP_001078498.1">
    <property type="nucleotide sequence ID" value="NM_001085029.3"/>
</dbReference>
<dbReference type="STRING" id="3702.Q6IM84"/>
<dbReference type="PaxDb" id="3702-AT4G35783.1"/>
<dbReference type="EnsemblPlants" id="AT4G35783.1">
    <property type="protein sequence ID" value="AT4G35783.1"/>
    <property type="gene ID" value="AT4G35783"/>
</dbReference>
<dbReference type="GeneID" id="5008183"/>
<dbReference type="Gramene" id="AT4G35783.1">
    <property type="protein sequence ID" value="AT4G35783.1"/>
    <property type="gene ID" value="AT4G35783"/>
</dbReference>
<dbReference type="KEGG" id="ath:AT4G35783"/>
<dbReference type="Araport" id="AT4G35783"/>
<dbReference type="TAIR" id="AT4G35783">
    <property type="gene designation" value="RTFL6"/>
</dbReference>
<dbReference type="eggNOG" id="ENOG502SEPH">
    <property type="taxonomic scope" value="Eukaryota"/>
</dbReference>
<dbReference type="HOGENOM" id="CLU_150897_3_1_1"/>
<dbReference type="InParanoid" id="Q6IM84"/>
<dbReference type="OMA" id="YIARRCI"/>
<dbReference type="OrthoDB" id="1613769at2759"/>
<dbReference type="PhylomeDB" id="Q6IM84"/>
<dbReference type="PRO" id="PR:Q6IM84"/>
<dbReference type="Proteomes" id="UP000006548">
    <property type="component" value="Chromosome 4"/>
</dbReference>
<dbReference type="ExpressionAtlas" id="Q6IM84">
    <property type="expression patterns" value="baseline and differential"/>
</dbReference>
<dbReference type="GO" id="GO:0005886">
    <property type="term" value="C:plasma membrane"/>
    <property type="evidence" value="ECO:0000250"/>
    <property type="project" value="UniProtKB"/>
</dbReference>
<dbReference type="GO" id="GO:0008285">
    <property type="term" value="P:negative regulation of cell population proliferation"/>
    <property type="evidence" value="ECO:0000250"/>
    <property type="project" value="UniProtKB"/>
</dbReference>
<dbReference type="GO" id="GO:0048367">
    <property type="term" value="P:shoot system development"/>
    <property type="evidence" value="ECO:0000250"/>
    <property type="project" value="TAIR"/>
</dbReference>
<dbReference type="InterPro" id="IPR012552">
    <property type="entry name" value="DVL"/>
</dbReference>
<dbReference type="InterPro" id="IPR051525">
    <property type="entry name" value="DVL_RTFL_regulatory"/>
</dbReference>
<dbReference type="PANTHER" id="PTHR33102">
    <property type="entry name" value="DVL19-RELATED-RELATED"/>
    <property type="match status" value="1"/>
</dbReference>
<dbReference type="Pfam" id="PF08137">
    <property type="entry name" value="DVL"/>
    <property type="match status" value="1"/>
</dbReference>
<protein>
    <recommendedName>
        <fullName evidence="4">Small polypeptide DEVIL 17</fullName>
    </recommendedName>
    <alternativeName>
        <fullName evidence="5">Small polypeptide ROTUNDIFOLIA LIKE 6</fullName>
        <shortName evidence="5">Small polypeptide ROT-FOUR-LIKE 6</shortName>
    </alternativeName>
</protein>
<name>DVL17_ARATH</name>
<keyword id="KW-1003">Cell membrane</keyword>
<keyword id="KW-0217">Developmental protein</keyword>
<keyword id="KW-0472">Membrane</keyword>
<keyword id="KW-1185">Reference proteome</keyword>
<keyword id="KW-0812">Transmembrane</keyword>
<keyword id="KW-1133">Transmembrane helix</keyword>
<accession>Q6IM84</accession>
<accession>A0ME33</accession>
<comment type="function">
    <text evidence="1">Small polypeptide acting as a regulatory molecule which coordinates cellular responses required for differentiation, growth and development, probably by restricting polar cell proliferation in lateral organs and coordinating socket cell recruitment and differentiation at trichome sites.</text>
</comment>
<comment type="subcellular location">
    <subcellularLocation>
        <location evidence="2">Cell membrane</location>
        <topology evidence="3">Single-pass membrane protein</topology>
    </subcellularLocation>
</comment>
<comment type="similarity">
    <text evidence="6">Belongs to the DVL/RTFL small polypeptides family.</text>
</comment>
<comment type="sequence caution" evidence="6">
    <conflict type="erroneous termination">
        <sequence resource="EMBL-CDS" id="ABK28375"/>
    </conflict>
    <text>Extended C-terminus.</text>
</comment>
<proteinExistence type="inferred from homology"/>
<evidence type="ECO:0000250" key="1">
    <source>
        <dbReference type="UniProtKB" id="Q6X5V0"/>
    </source>
</evidence>
<evidence type="ECO:0000250" key="2">
    <source>
        <dbReference type="UniProtKB" id="Q7XXN8"/>
    </source>
</evidence>
<evidence type="ECO:0000255" key="3"/>
<evidence type="ECO:0000303" key="4">
    <source>
    </source>
</evidence>
<evidence type="ECO:0000303" key="5">
    <source>
    </source>
</evidence>
<evidence type="ECO:0000305" key="6"/>
<evidence type="ECO:0000312" key="7">
    <source>
        <dbReference type="Araport" id="AT4G35783"/>
    </source>
</evidence>
<evidence type="ECO:0000312" key="8">
    <source>
        <dbReference type="EMBL" id="AL031986"/>
    </source>
</evidence>
<gene>
    <name evidence="4" type="primary">DVL17</name>
    <name evidence="5" type="synonym">RTFL6</name>
    <name evidence="7" type="ordered locus">At4g35783</name>
    <name evidence="8" type="ORF">F4B14</name>
</gene>
<sequence>MGQCSSATKMRRKRKREEECCRESMERRNKGCLAMVKERRSRFYIARRCILMLLCWHKYANS</sequence>
<feature type="chain" id="PRO_0000452785" description="Small polypeptide DEVIL 17">
    <location>
        <begin position="1"/>
        <end position="62"/>
    </location>
</feature>
<feature type="transmembrane region" description="Helical" evidence="3">
    <location>
        <begin position="39"/>
        <end position="56"/>
    </location>
</feature>
<feature type="region of interest" description="Required for DVL/RTFL small polypeptide activity" evidence="2">
    <location>
        <begin position="27"/>
        <end position="58"/>
    </location>
</feature>